<comment type="function">
    <text evidence="1">Catalyzes the NADPH-dependent reduction of N-acetyl-5-glutamyl phosphate to yield N-acetyl-L-glutamate 5-semialdehyde.</text>
</comment>
<comment type="catalytic activity">
    <reaction evidence="1">
        <text>N-acetyl-L-glutamate 5-semialdehyde + phosphate + NADP(+) = N-acetyl-L-glutamyl 5-phosphate + NADPH + H(+)</text>
        <dbReference type="Rhea" id="RHEA:21588"/>
        <dbReference type="ChEBI" id="CHEBI:15378"/>
        <dbReference type="ChEBI" id="CHEBI:29123"/>
        <dbReference type="ChEBI" id="CHEBI:43474"/>
        <dbReference type="ChEBI" id="CHEBI:57783"/>
        <dbReference type="ChEBI" id="CHEBI:57936"/>
        <dbReference type="ChEBI" id="CHEBI:58349"/>
        <dbReference type="EC" id="1.2.1.38"/>
    </reaction>
</comment>
<comment type="pathway">
    <text evidence="1">Amino-acid biosynthesis; L-arginine biosynthesis; N(2)-acetyl-L-ornithine from L-glutamate: step 3/4.</text>
</comment>
<comment type="subcellular location">
    <subcellularLocation>
        <location evidence="1">Cytoplasm</location>
    </subcellularLocation>
</comment>
<comment type="similarity">
    <text evidence="1">Belongs to the NAGSA dehydrogenase family. Type 1 subfamily.</text>
</comment>
<proteinExistence type="inferred from homology"/>
<sequence length="349" mass="38056">MISVGIVGGTGYTGVELLRILLRHPKAQVRVLTSRTEAGKPVADMFPNLRGHTDLQFSDLNIDALKECDVVFFATPHGVAMQHAKDLIAAGTKVIDLAADFRLQNLEQFEKWYGMEHACPDVLKDSVYGLTELNREKIKQAQVIGNPGCYPTTVQLGLAPLLKSAQALIETKNIIIDAKSGVSGAGRKASLGMIYSENADNFKAYGVAGHRHHPEIVEALENIAGKKDVFEGLLFVPHLVPMIRGMLSTIYVDLTEAGKQTDLQALYENFYANEKFVDVMPANSSPETRSVRGANELRIALYKPQPNKLIILAAQDNLVKGASGQAVQNMNLMFGFNEDEGLQGIGLLP</sequence>
<accession>B0VQK3</accession>
<keyword id="KW-0028">Amino-acid biosynthesis</keyword>
<keyword id="KW-0055">Arginine biosynthesis</keyword>
<keyword id="KW-0963">Cytoplasm</keyword>
<keyword id="KW-0521">NADP</keyword>
<keyword id="KW-0560">Oxidoreductase</keyword>
<organism>
    <name type="scientific">Acinetobacter baumannii (strain SDF)</name>
    <dbReference type="NCBI Taxonomy" id="509170"/>
    <lineage>
        <taxon>Bacteria</taxon>
        <taxon>Pseudomonadati</taxon>
        <taxon>Pseudomonadota</taxon>
        <taxon>Gammaproteobacteria</taxon>
        <taxon>Moraxellales</taxon>
        <taxon>Moraxellaceae</taxon>
        <taxon>Acinetobacter</taxon>
        <taxon>Acinetobacter calcoaceticus/baumannii complex</taxon>
    </lineage>
</organism>
<evidence type="ECO:0000255" key="1">
    <source>
        <dbReference type="HAMAP-Rule" id="MF_00150"/>
    </source>
</evidence>
<reference key="1">
    <citation type="journal article" date="2008" name="PLoS ONE">
        <title>Comparative analysis of Acinetobacters: three genomes for three lifestyles.</title>
        <authorList>
            <person name="Vallenet D."/>
            <person name="Nordmann P."/>
            <person name="Barbe V."/>
            <person name="Poirel L."/>
            <person name="Mangenot S."/>
            <person name="Bataille E."/>
            <person name="Dossat C."/>
            <person name="Gas S."/>
            <person name="Kreimeyer A."/>
            <person name="Lenoble P."/>
            <person name="Oztas S."/>
            <person name="Poulain J."/>
            <person name="Segurens B."/>
            <person name="Robert C."/>
            <person name="Abergel C."/>
            <person name="Claverie J.-M."/>
            <person name="Raoult D."/>
            <person name="Medigue C."/>
            <person name="Weissenbach J."/>
            <person name="Cruveiller S."/>
        </authorList>
    </citation>
    <scope>NUCLEOTIDE SEQUENCE [LARGE SCALE GENOMIC DNA]</scope>
    <source>
        <strain>SDF</strain>
    </source>
</reference>
<gene>
    <name evidence="1" type="primary">argC</name>
    <name type="ordered locus">ABSDF2051</name>
</gene>
<dbReference type="EC" id="1.2.1.38" evidence="1"/>
<dbReference type="EMBL" id="CU468230">
    <property type="protein sequence ID" value="CAP01382.1"/>
    <property type="molecule type" value="Genomic_DNA"/>
</dbReference>
<dbReference type="SMR" id="B0VQK3"/>
<dbReference type="KEGG" id="abm:ABSDF2051"/>
<dbReference type="HOGENOM" id="CLU_006384_0_1_6"/>
<dbReference type="UniPathway" id="UPA00068">
    <property type="reaction ID" value="UER00108"/>
</dbReference>
<dbReference type="Proteomes" id="UP000001741">
    <property type="component" value="Chromosome"/>
</dbReference>
<dbReference type="GO" id="GO:0005737">
    <property type="term" value="C:cytoplasm"/>
    <property type="evidence" value="ECO:0007669"/>
    <property type="project" value="UniProtKB-SubCell"/>
</dbReference>
<dbReference type="GO" id="GO:0003942">
    <property type="term" value="F:N-acetyl-gamma-glutamyl-phosphate reductase activity"/>
    <property type="evidence" value="ECO:0007669"/>
    <property type="project" value="UniProtKB-UniRule"/>
</dbReference>
<dbReference type="GO" id="GO:0051287">
    <property type="term" value="F:NAD binding"/>
    <property type="evidence" value="ECO:0007669"/>
    <property type="project" value="InterPro"/>
</dbReference>
<dbReference type="GO" id="GO:0070401">
    <property type="term" value="F:NADP+ binding"/>
    <property type="evidence" value="ECO:0007669"/>
    <property type="project" value="InterPro"/>
</dbReference>
<dbReference type="GO" id="GO:0006526">
    <property type="term" value="P:L-arginine biosynthetic process"/>
    <property type="evidence" value="ECO:0007669"/>
    <property type="project" value="UniProtKB-UniRule"/>
</dbReference>
<dbReference type="CDD" id="cd23934">
    <property type="entry name" value="AGPR_1_C"/>
    <property type="match status" value="1"/>
</dbReference>
<dbReference type="CDD" id="cd17895">
    <property type="entry name" value="AGPR_1_N"/>
    <property type="match status" value="1"/>
</dbReference>
<dbReference type="FunFam" id="3.30.360.10:FF:000014">
    <property type="entry name" value="N-acetyl-gamma-glutamyl-phosphate reductase"/>
    <property type="match status" value="1"/>
</dbReference>
<dbReference type="Gene3D" id="3.30.360.10">
    <property type="entry name" value="Dihydrodipicolinate Reductase, domain 2"/>
    <property type="match status" value="1"/>
</dbReference>
<dbReference type="Gene3D" id="3.40.50.720">
    <property type="entry name" value="NAD(P)-binding Rossmann-like Domain"/>
    <property type="match status" value="1"/>
</dbReference>
<dbReference type="HAMAP" id="MF_00150">
    <property type="entry name" value="ArgC_type1"/>
    <property type="match status" value="1"/>
</dbReference>
<dbReference type="InterPro" id="IPR023013">
    <property type="entry name" value="AGPR_AS"/>
</dbReference>
<dbReference type="InterPro" id="IPR000706">
    <property type="entry name" value="AGPR_type-1"/>
</dbReference>
<dbReference type="InterPro" id="IPR036291">
    <property type="entry name" value="NAD(P)-bd_dom_sf"/>
</dbReference>
<dbReference type="InterPro" id="IPR050085">
    <property type="entry name" value="NAGSA_dehydrogenase"/>
</dbReference>
<dbReference type="InterPro" id="IPR000534">
    <property type="entry name" value="Semialdehyde_DH_NAD-bd"/>
</dbReference>
<dbReference type="NCBIfam" id="TIGR01850">
    <property type="entry name" value="argC"/>
    <property type="match status" value="1"/>
</dbReference>
<dbReference type="PANTHER" id="PTHR32338:SF10">
    <property type="entry name" value="N-ACETYL-GAMMA-GLUTAMYL-PHOSPHATE REDUCTASE, CHLOROPLASTIC-RELATED"/>
    <property type="match status" value="1"/>
</dbReference>
<dbReference type="PANTHER" id="PTHR32338">
    <property type="entry name" value="N-ACETYL-GAMMA-GLUTAMYL-PHOSPHATE REDUCTASE, CHLOROPLASTIC-RELATED-RELATED"/>
    <property type="match status" value="1"/>
</dbReference>
<dbReference type="Pfam" id="PF01118">
    <property type="entry name" value="Semialdhyde_dh"/>
    <property type="match status" value="1"/>
</dbReference>
<dbReference type="Pfam" id="PF22698">
    <property type="entry name" value="Semialdhyde_dhC_1"/>
    <property type="match status" value="1"/>
</dbReference>
<dbReference type="SMART" id="SM00859">
    <property type="entry name" value="Semialdhyde_dh"/>
    <property type="match status" value="1"/>
</dbReference>
<dbReference type="SUPFAM" id="SSF55347">
    <property type="entry name" value="Glyceraldehyde-3-phosphate dehydrogenase-like, C-terminal domain"/>
    <property type="match status" value="1"/>
</dbReference>
<dbReference type="SUPFAM" id="SSF51735">
    <property type="entry name" value="NAD(P)-binding Rossmann-fold domains"/>
    <property type="match status" value="1"/>
</dbReference>
<dbReference type="PROSITE" id="PS01224">
    <property type="entry name" value="ARGC"/>
    <property type="match status" value="1"/>
</dbReference>
<protein>
    <recommendedName>
        <fullName evidence="1">N-acetyl-gamma-glutamyl-phosphate reductase</fullName>
        <shortName evidence="1">AGPR</shortName>
        <ecNumber evidence="1">1.2.1.38</ecNumber>
    </recommendedName>
    <alternativeName>
        <fullName evidence="1">N-acetyl-glutamate semialdehyde dehydrogenase</fullName>
        <shortName evidence="1">NAGSA dehydrogenase</shortName>
    </alternativeName>
</protein>
<name>ARGC_ACIBS</name>
<feature type="chain" id="PRO_1000096708" description="N-acetyl-gamma-glutamyl-phosphate reductase">
    <location>
        <begin position="1"/>
        <end position="349"/>
    </location>
</feature>
<feature type="active site" evidence="1">
    <location>
        <position position="149"/>
    </location>
</feature>